<dbReference type="EMBL" id="AB010076">
    <property type="protein sequence ID" value="BAB11420.1"/>
    <property type="status" value="ALT_SEQ"/>
    <property type="molecule type" value="Genomic_DNA"/>
</dbReference>
<dbReference type="EMBL" id="CP002688">
    <property type="protein sequence ID" value="AED97913.1"/>
    <property type="molecule type" value="Genomic_DNA"/>
</dbReference>
<dbReference type="EMBL" id="AK118783">
    <property type="protein sequence ID" value="BAC43376.1"/>
    <property type="molecule type" value="mRNA"/>
</dbReference>
<dbReference type="EMBL" id="BT025746">
    <property type="protein sequence ID" value="ABF83636.1"/>
    <property type="molecule type" value="mRNA"/>
</dbReference>
<dbReference type="RefSeq" id="NP_201258.2">
    <property type="nucleotide sequence ID" value="NM_125849.4"/>
</dbReference>
<dbReference type="SMR" id="Q8GWK6"/>
<dbReference type="FunCoup" id="Q8GWK6">
    <property type="interactions" value="42"/>
</dbReference>
<dbReference type="STRING" id="3702.Q8GWK6"/>
<dbReference type="PaxDb" id="3702-AT5G64530.1"/>
<dbReference type="EnsemblPlants" id="AT5G64530.1">
    <property type="protein sequence ID" value="AT5G64530.1"/>
    <property type="gene ID" value="AT5G64530"/>
</dbReference>
<dbReference type="GeneID" id="836574"/>
<dbReference type="Gramene" id="AT5G64530.1">
    <property type="protein sequence ID" value="AT5G64530.1"/>
    <property type="gene ID" value="AT5G64530"/>
</dbReference>
<dbReference type="KEGG" id="ath:AT5G64530"/>
<dbReference type="Araport" id="AT5G64530"/>
<dbReference type="TAIR" id="AT5G64530">
    <property type="gene designation" value="XND1"/>
</dbReference>
<dbReference type="eggNOG" id="ENOG502QRTS">
    <property type="taxonomic scope" value="Eukaryota"/>
</dbReference>
<dbReference type="HOGENOM" id="CLU_035664_11_0_1"/>
<dbReference type="InParanoid" id="Q8GWK6"/>
<dbReference type="OMA" id="VYERNCD"/>
<dbReference type="OrthoDB" id="1877845at2759"/>
<dbReference type="PhylomeDB" id="Q8GWK6"/>
<dbReference type="PRO" id="PR:Q8GWK6"/>
<dbReference type="Proteomes" id="UP000006548">
    <property type="component" value="Chromosome 5"/>
</dbReference>
<dbReference type="ExpressionAtlas" id="Q8GWK6">
    <property type="expression patterns" value="baseline and differential"/>
</dbReference>
<dbReference type="GO" id="GO:0005634">
    <property type="term" value="C:nucleus"/>
    <property type="evidence" value="ECO:0007669"/>
    <property type="project" value="UniProtKB-SubCell"/>
</dbReference>
<dbReference type="GO" id="GO:0003677">
    <property type="term" value="F:DNA binding"/>
    <property type="evidence" value="ECO:0007669"/>
    <property type="project" value="UniProtKB-KW"/>
</dbReference>
<dbReference type="GO" id="GO:0003700">
    <property type="term" value="F:DNA-binding transcription factor activity"/>
    <property type="evidence" value="ECO:0000250"/>
    <property type="project" value="TAIR"/>
</dbReference>
<dbReference type="GO" id="GO:0043067">
    <property type="term" value="P:regulation of programmed cell death"/>
    <property type="evidence" value="ECO:0000315"/>
    <property type="project" value="TAIR"/>
</dbReference>
<dbReference type="GO" id="GO:0048367">
    <property type="term" value="P:shoot system development"/>
    <property type="evidence" value="ECO:0000315"/>
    <property type="project" value="TAIR"/>
</dbReference>
<dbReference type="GO" id="GO:0010089">
    <property type="term" value="P:xylem development"/>
    <property type="evidence" value="ECO:0000315"/>
    <property type="project" value="TAIR"/>
</dbReference>
<dbReference type="FunFam" id="2.170.150.80:FF:000014">
    <property type="entry name" value="NAC domain-containing protein 104"/>
    <property type="match status" value="1"/>
</dbReference>
<dbReference type="Gene3D" id="2.170.150.80">
    <property type="entry name" value="NAC domain"/>
    <property type="match status" value="1"/>
</dbReference>
<dbReference type="InterPro" id="IPR003441">
    <property type="entry name" value="NAC-dom"/>
</dbReference>
<dbReference type="InterPro" id="IPR036093">
    <property type="entry name" value="NAC_dom_sf"/>
</dbReference>
<dbReference type="PANTHER" id="PTHR31719:SF134">
    <property type="entry name" value="NAC DOMAIN-CONTAINING PROTEIN 104"/>
    <property type="match status" value="1"/>
</dbReference>
<dbReference type="PANTHER" id="PTHR31719">
    <property type="entry name" value="NAC TRANSCRIPTION FACTOR 56"/>
    <property type="match status" value="1"/>
</dbReference>
<dbReference type="Pfam" id="PF02365">
    <property type="entry name" value="NAM"/>
    <property type="match status" value="1"/>
</dbReference>
<dbReference type="SUPFAM" id="SSF101941">
    <property type="entry name" value="NAC domain"/>
    <property type="match status" value="1"/>
</dbReference>
<dbReference type="PROSITE" id="PS51005">
    <property type="entry name" value="NAC"/>
    <property type="match status" value="1"/>
</dbReference>
<keyword id="KW-0238">DNA-binding</keyword>
<keyword id="KW-0539">Nucleus</keyword>
<keyword id="KW-1185">Reference proteome</keyword>
<keyword id="KW-0804">Transcription</keyword>
<keyword id="KW-0805">Transcription regulation</keyword>
<organism>
    <name type="scientific">Arabidopsis thaliana</name>
    <name type="common">Mouse-ear cress</name>
    <dbReference type="NCBI Taxonomy" id="3702"/>
    <lineage>
        <taxon>Eukaryota</taxon>
        <taxon>Viridiplantae</taxon>
        <taxon>Streptophyta</taxon>
        <taxon>Embryophyta</taxon>
        <taxon>Tracheophyta</taxon>
        <taxon>Spermatophyta</taxon>
        <taxon>Magnoliopsida</taxon>
        <taxon>eudicotyledons</taxon>
        <taxon>Gunneridae</taxon>
        <taxon>Pentapetalae</taxon>
        <taxon>rosids</taxon>
        <taxon>malvids</taxon>
        <taxon>Brassicales</taxon>
        <taxon>Brassicaceae</taxon>
        <taxon>Camelineae</taxon>
        <taxon>Arabidopsis</taxon>
    </lineage>
</organism>
<protein>
    <recommendedName>
        <fullName evidence="7">NAC domain-containing protein 104</fullName>
        <shortName evidence="6">ANAC104</shortName>
    </recommendedName>
    <alternativeName>
        <fullName evidence="9">Protein XYLEM NAC DOMAIN 1</fullName>
    </alternativeName>
</protein>
<feature type="chain" id="PRO_0000435688" description="NAC domain-containing protein 104">
    <location>
        <begin position="1"/>
        <end position="187"/>
    </location>
</feature>
<feature type="domain" description="NAC" evidence="1">
    <location>
        <begin position="3"/>
        <end position="155"/>
    </location>
</feature>
<feature type="DNA-binding region" evidence="1">
    <location>
        <begin position="94"/>
        <end position="161"/>
    </location>
</feature>
<feature type="region of interest" description="Disordered" evidence="2">
    <location>
        <begin position="118"/>
        <end position="142"/>
    </location>
</feature>
<reference key="1">
    <citation type="journal article" date="1998" name="DNA Res.">
        <title>Structural analysis of Arabidopsis thaliana chromosome 5. IV. Sequence features of the regions of 1,456,315 bp covered by nineteen physically assigned P1 and TAC clones.</title>
        <authorList>
            <person name="Sato S."/>
            <person name="Kaneko T."/>
            <person name="Kotani H."/>
            <person name="Nakamura Y."/>
            <person name="Asamizu E."/>
            <person name="Miyajima N."/>
            <person name="Tabata S."/>
        </authorList>
    </citation>
    <scope>NUCLEOTIDE SEQUENCE [LARGE SCALE GENOMIC DNA]</scope>
    <source>
        <strain>cv. Columbia</strain>
    </source>
</reference>
<reference key="2">
    <citation type="journal article" date="2017" name="Plant J.">
        <title>Araport11: a complete reannotation of the Arabidopsis thaliana reference genome.</title>
        <authorList>
            <person name="Cheng C.Y."/>
            <person name="Krishnakumar V."/>
            <person name="Chan A.P."/>
            <person name="Thibaud-Nissen F."/>
            <person name="Schobel S."/>
            <person name="Town C.D."/>
        </authorList>
    </citation>
    <scope>GENOME REANNOTATION</scope>
    <source>
        <strain>cv. Columbia</strain>
    </source>
</reference>
<reference key="3">
    <citation type="journal article" date="2002" name="Science">
        <title>Functional annotation of a full-length Arabidopsis cDNA collection.</title>
        <authorList>
            <person name="Seki M."/>
            <person name="Narusaka M."/>
            <person name="Kamiya A."/>
            <person name="Ishida J."/>
            <person name="Satou M."/>
            <person name="Sakurai T."/>
            <person name="Nakajima M."/>
            <person name="Enju A."/>
            <person name="Akiyama K."/>
            <person name="Oono Y."/>
            <person name="Muramatsu M."/>
            <person name="Hayashizaki Y."/>
            <person name="Kawai J."/>
            <person name="Carninci P."/>
            <person name="Itoh M."/>
            <person name="Ishii Y."/>
            <person name="Arakawa T."/>
            <person name="Shibata K."/>
            <person name="Shinagawa A."/>
            <person name="Shinozaki K."/>
        </authorList>
    </citation>
    <scope>NUCLEOTIDE SEQUENCE [LARGE SCALE MRNA]</scope>
    <source>
        <strain>cv. Columbia</strain>
    </source>
</reference>
<reference key="4">
    <citation type="submission" date="2006-06" db="EMBL/GenBank/DDBJ databases">
        <title>Arabidopsis ORF clones.</title>
        <authorList>
            <person name="Kim C.J."/>
            <person name="Chen H."/>
            <person name="Quinitio C."/>
            <person name="Shinn P."/>
            <person name="Ecker J.R."/>
        </authorList>
    </citation>
    <scope>NUCLEOTIDE SEQUENCE [LARGE SCALE MRNA]</scope>
    <source>
        <strain>cv. Columbia</strain>
    </source>
</reference>
<reference key="5">
    <citation type="journal article" date="2003" name="DNA Res.">
        <title>Comprehensive analysis of NAC family genes in Oryza sativa and Arabidopsis thaliana.</title>
        <authorList>
            <person name="Ooka H."/>
            <person name="Satoh K."/>
            <person name="Doi K."/>
            <person name="Nagata T."/>
            <person name="Otomo Y."/>
            <person name="Murakami K."/>
            <person name="Matsubara K."/>
            <person name="Osato N."/>
            <person name="Kawai J."/>
            <person name="Carninci P."/>
            <person name="Hayashizaki Y."/>
            <person name="Suzuki K."/>
            <person name="Kojima K."/>
            <person name="Takahara Y."/>
            <person name="Yamamoto K."/>
            <person name="Kikuchi S."/>
        </authorList>
    </citation>
    <scope>GENE FAMILY</scope>
    <scope>NOMENCLATURE</scope>
</reference>
<reference key="6">
    <citation type="journal article" date="2005" name="Plant Physiol.">
        <title>The xylem and phloem transcriptomes from secondary tissues of the Arabidopsis root-hypocotyl.</title>
        <authorList>
            <person name="Zhao C."/>
            <person name="Craig J.C."/>
            <person name="Petzold H.E."/>
            <person name="Dickerman A.W."/>
            <person name="Beers E.P."/>
        </authorList>
    </citation>
    <scope>TISSUE SPECIFICITY</scope>
</reference>
<reference key="7">
    <citation type="journal article" date="2008" name="Plant J.">
        <title>XND1, a member of the NAC domain family in Arabidopsis thaliana, negatively regulates lignocellulose synthesis and programmed cell death in xylem.</title>
        <authorList>
            <person name="Zhao C."/>
            <person name="Avci U."/>
            <person name="Grant E.H."/>
            <person name="Haigler C.H."/>
            <person name="Beers E.P."/>
        </authorList>
    </citation>
    <scope>FUNCTION</scope>
    <scope>TISSUE SPECIFICITY</scope>
    <scope>DISRUPTION PHENOTYPE</scope>
</reference>
<reference key="8">
    <citation type="journal article" date="2010" name="Planta">
        <title>Characterization of NAC domain transcription factors implicated in control of vascular cell differentiation in Arabidopsis and Populus.</title>
        <authorList>
            <person name="Grant E.H."/>
            <person name="Fujino T."/>
            <person name="Beers E.P."/>
            <person name="Brunner A.M."/>
        </authorList>
    </citation>
    <scope>FUNCTION</scope>
</reference>
<evidence type="ECO:0000255" key="1">
    <source>
        <dbReference type="PROSITE-ProRule" id="PRU00353"/>
    </source>
</evidence>
<evidence type="ECO:0000256" key="2">
    <source>
        <dbReference type="SAM" id="MobiDB-lite"/>
    </source>
</evidence>
<evidence type="ECO:0000269" key="3">
    <source>
    </source>
</evidence>
<evidence type="ECO:0000269" key="4">
    <source>
    </source>
</evidence>
<evidence type="ECO:0000269" key="5">
    <source>
    </source>
</evidence>
<evidence type="ECO:0000303" key="6">
    <source>
    </source>
</evidence>
<evidence type="ECO:0000305" key="7"/>
<evidence type="ECO:0000312" key="8">
    <source>
        <dbReference type="Araport" id="AT5G64530"/>
    </source>
</evidence>
<evidence type="ECO:0000312" key="9">
    <source>
        <dbReference type="EMBL" id="AED97913.1"/>
    </source>
</evidence>
<evidence type="ECO:0000312" key="10">
    <source>
        <dbReference type="EMBL" id="BAB11420.1"/>
    </source>
</evidence>
<sequence>MNLPPGFRFFPTDEELVVHFLHRKASLLPCHPDVIPDLDLYHYDPWDLPGKALGEGRQWYFYSRKTQERVTSNGYWGSMGMDEPIYTSSTHKKVGIKKYLTFYLGDSQTNWIMQEYSLPDSSSSSSRSSKRSSRASSSSHKPDYSKWVICRVYEQNCSEEEDDDGTELSCLDEVFLSLDDLDEVSLP</sequence>
<name>NC104_ARATH</name>
<gene>
    <name evidence="7" type="primary">NAC104</name>
    <name type="synonym">XND1</name>
    <name evidence="8" type="ordered locus">At5g64530</name>
    <name evidence="10" type="ORF">MUB3.5</name>
</gene>
<accession>Q8GWK6</accession>
<accession>Q9FLG5</accession>
<proteinExistence type="evidence at transcript level"/>
<comment type="function">
    <text evidence="4 5">Probable transcription factor that influences tracheary elements and xylem development by negatively regulating secondary cell wall fiber synthesis and programmed cell death.</text>
</comment>
<comment type="subcellular location">
    <subcellularLocation>
        <location evidence="1">Nucleus</location>
    </subcellularLocation>
</comment>
<comment type="tissue specificity">
    <text evidence="3 4">Expressed in root xylem vessels (PubMed:15923329). Expressed in stems, vascular tissue of cauline leaves and tracheary elements of sepals (PubMed:18069942).</text>
</comment>
<comment type="domain">
    <text evidence="1">The NAC domain includes a DNA binding domain and a dimerization domain.</text>
</comment>
<comment type="disruption phenotype">
    <text evidence="4">Reduced plant height and length of tracheary elements in the stem.</text>
</comment>
<comment type="miscellaneous">
    <text>Plants over-expressing NAC104 show severe dwarfism and suppression of tracheary element differentiation.</text>
</comment>
<comment type="sequence caution" evidence="7">
    <conflict type="erroneous gene model prediction">
        <sequence resource="EMBL-CDS" id="BAB11420"/>
    </conflict>
</comment>